<keyword id="KW-0050">Antiport</keyword>
<keyword id="KW-1003">Cell membrane</keyword>
<keyword id="KW-0406">Ion transport</keyword>
<keyword id="KW-0472">Membrane</keyword>
<keyword id="KW-1185">Reference proteome</keyword>
<keyword id="KW-0812">Transmembrane</keyword>
<keyword id="KW-1133">Transmembrane helix</keyword>
<keyword id="KW-0813">Transport</keyword>
<gene>
    <name type="primary">mnhF2</name>
    <name type="synonym">mrpF2</name>
    <name type="ordered locus">SERP0286</name>
</gene>
<comment type="subunit">
    <text evidence="1">May form a heterooligomeric complex that consists of seven subunits: mnhA2, mnhB2, mnhC2, mnhD2, mnhE2, mnhF2 and mnhG2.</text>
</comment>
<comment type="subcellular location">
    <subcellularLocation>
        <location evidence="3">Cell membrane</location>
        <topology evidence="3">Multi-pass membrane protein</topology>
    </subcellularLocation>
</comment>
<comment type="similarity">
    <text evidence="3">Belongs to the CPA3 antiporters (TC 2.A.63) subunit F family.</text>
</comment>
<name>MNHF2_STAEQ</name>
<proteinExistence type="inferred from homology"/>
<evidence type="ECO:0000250" key="1"/>
<evidence type="ECO:0000255" key="2"/>
<evidence type="ECO:0000305" key="3"/>
<reference key="1">
    <citation type="journal article" date="2005" name="J. Bacteriol.">
        <title>Insights on evolution of virulence and resistance from the complete genome analysis of an early methicillin-resistant Staphylococcus aureus strain and a biofilm-producing methicillin-resistant Staphylococcus epidermidis strain.</title>
        <authorList>
            <person name="Gill S.R."/>
            <person name="Fouts D.E."/>
            <person name="Archer G.L."/>
            <person name="Mongodin E.F."/>
            <person name="DeBoy R.T."/>
            <person name="Ravel J."/>
            <person name="Paulsen I.T."/>
            <person name="Kolonay J.F."/>
            <person name="Brinkac L.M."/>
            <person name="Beanan M.J."/>
            <person name="Dodson R.J."/>
            <person name="Daugherty S.C."/>
            <person name="Madupu R."/>
            <person name="Angiuoli S.V."/>
            <person name="Durkin A.S."/>
            <person name="Haft D.H."/>
            <person name="Vamathevan J.J."/>
            <person name="Khouri H."/>
            <person name="Utterback T.R."/>
            <person name="Lee C."/>
            <person name="Dimitrov G."/>
            <person name="Jiang L."/>
            <person name="Qin H."/>
            <person name="Weidman J."/>
            <person name="Tran K."/>
            <person name="Kang K.H."/>
            <person name="Hance I.R."/>
            <person name="Nelson K.E."/>
            <person name="Fraser C.M."/>
        </authorList>
    </citation>
    <scope>NUCLEOTIDE SEQUENCE [LARGE SCALE GENOMIC DNA]</scope>
    <source>
        <strain>ATCC 35984 / DSM 28319 / BCRC 17069 / CCUG 31568 / BM 3577 / RP62A</strain>
    </source>
</reference>
<organism>
    <name type="scientific">Staphylococcus epidermidis (strain ATCC 35984 / DSM 28319 / BCRC 17069 / CCUG 31568 / BM 3577 / RP62A)</name>
    <dbReference type="NCBI Taxonomy" id="176279"/>
    <lineage>
        <taxon>Bacteria</taxon>
        <taxon>Bacillati</taxon>
        <taxon>Bacillota</taxon>
        <taxon>Bacilli</taxon>
        <taxon>Bacillales</taxon>
        <taxon>Staphylococcaceae</taxon>
        <taxon>Staphylococcus</taxon>
    </lineage>
</organism>
<accession>Q5HRA7</accession>
<dbReference type="EMBL" id="CP000029">
    <property type="protein sequence ID" value="AAW53737.1"/>
    <property type="molecule type" value="Genomic_DNA"/>
</dbReference>
<dbReference type="RefSeq" id="WP_001832031.1">
    <property type="nucleotide sequence ID" value="NC_002976.3"/>
</dbReference>
<dbReference type="SMR" id="Q5HRA7"/>
<dbReference type="STRING" id="176279.SERP0286"/>
<dbReference type="GeneID" id="50019441"/>
<dbReference type="KEGG" id="ser:SERP0286"/>
<dbReference type="eggNOG" id="COG2212">
    <property type="taxonomic scope" value="Bacteria"/>
</dbReference>
<dbReference type="HOGENOM" id="CLU_125825_1_3_9"/>
<dbReference type="Proteomes" id="UP000000531">
    <property type="component" value="Chromosome"/>
</dbReference>
<dbReference type="GO" id="GO:0005886">
    <property type="term" value="C:plasma membrane"/>
    <property type="evidence" value="ECO:0007669"/>
    <property type="project" value="UniProtKB-SubCell"/>
</dbReference>
<dbReference type="GO" id="GO:0015385">
    <property type="term" value="F:sodium:proton antiporter activity"/>
    <property type="evidence" value="ECO:0007669"/>
    <property type="project" value="TreeGrafter"/>
</dbReference>
<dbReference type="InterPro" id="IPR007208">
    <property type="entry name" value="MrpF/PhaF-like"/>
</dbReference>
<dbReference type="NCBIfam" id="NF009300">
    <property type="entry name" value="PRK12657.1"/>
    <property type="match status" value="1"/>
</dbReference>
<dbReference type="PANTHER" id="PTHR34702">
    <property type="entry name" value="NA(+)/H(+) ANTIPORTER SUBUNIT F1"/>
    <property type="match status" value="1"/>
</dbReference>
<dbReference type="PANTHER" id="PTHR34702:SF1">
    <property type="entry name" value="NA(+)_H(+) ANTIPORTER SUBUNIT F"/>
    <property type="match status" value="1"/>
</dbReference>
<dbReference type="Pfam" id="PF04066">
    <property type="entry name" value="MrpF_PhaF"/>
    <property type="match status" value="1"/>
</dbReference>
<dbReference type="PIRSF" id="PIRSF028784">
    <property type="entry name" value="MrpF"/>
    <property type="match status" value="1"/>
</dbReference>
<protein>
    <recommendedName>
        <fullName>Putative antiporter subunit mnhF2</fullName>
    </recommendedName>
    <alternativeName>
        <fullName>Mrp complex subunit F2</fullName>
    </alternativeName>
    <alternativeName>
        <fullName>Putative NADH-ubiquinone oxidoreductase subunit mnhF2</fullName>
    </alternativeName>
</protein>
<feature type="chain" id="PRO_0000372206" description="Putative antiporter subunit mnhF2">
    <location>
        <begin position="1"/>
        <end position="100"/>
    </location>
</feature>
<feature type="transmembrane region" description="Helical" evidence="2">
    <location>
        <begin position="5"/>
        <end position="25"/>
    </location>
</feature>
<feature type="transmembrane region" description="Helical" evidence="2">
    <location>
        <begin position="38"/>
        <end position="60"/>
    </location>
</feature>
<feature type="transmembrane region" description="Helical" evidence="2">
    <location>
        <begin position="65"/>
        <end position="87"/>
    </location>
</feature>
<sequence length="100" mass="10943">MIEMFTQIFIISALVIFGMALLVCLVRLIKGPTTADRVVSFDASSAVVMSIVGVMSVIFNSVSYLDSIMLIAIISFVSSVSISRFIGEGRVFNGNHKRHR</sequence>